<protein>
    <recommendedName>
        <fullName evidence="2">tRNA N6-adenosine threonylcarbamoyltransferase</fullName>
        <ecNumber evidence="2">2.3.1.234</ecNumber>
    </recommendedName>
    <alternativeName>
        <fullName>N6-L-threonylcarbamoyladenine synthase</fullName>
        <shortName>t(6)A synthase</shortName>
    </alternativeName>
    <alternativeName>
        <fullName evidence="2">O-sialoglycoprotein endopeptidase</fullName>
    </alternativeName>
    <alternativeName>
        <fullName evidence="2">t(6)A37 threonylcarbamoyladenosine biosynthesis protein OSGEP</fullName>
    </alternativeName>
    <alternativeName>
        <fullName evidence="2">tRNA threonylcarbamoyladenosine biosynthesis protein OSGEP</fullName>
    </alternativeName>
</protein>
<gene>
    <name evidence="2" type="primary">OSGEP</name>
</gene>
<comment type="function">
    <text evidence="2">Component of the EKC/KEOPS complex that is required for the formation of a threonylcarbamoyl group on adenosine at position 37 (t(6)A37) in tRNAs that read codons beginning with adenine. The complex is probably involved in the transfer of the threonylcarbamoyl moiety of threonylcarbamoyl-AMP (TC-AMP) to the N6 group of A37. OSGEP likely plays a direct catalytic role in this reaction, but requires other protein(s) of the complex to fulfill this activity.</text>
</comment>
<comment type="catalytic activity">
    <reaction evidence="2">
        <text>L-threonylcarbamoyladenylate + adenosine(37) in tRNA = N(6)-L-threonylcarbamoyladenosine(37) in tRNA + AMP + H(+)</text>
        <dbReference type="Rhea" id="RHEA:37059"/>
        <dbReference type="Rhea" id="RHEA-COMP:10162"/>
        <dbReference type="Rhea" id="RHEA-COMP:10163"/>
        <dbReference type="ChEBI" id="CHEBI:15378"/>
        <dbReference type="ChEBI" id="CHEBI:73682"/>
        <dbReference type="ChEBI" id="CHEBI:74411"/>
        <dbReference type="ChEBI" id="CHEBI:74418"/>
        <dbReference type="ChEBI" id="CHEBI:456215"/>
        <dbReference type="EC" id="2.3.1.234"/>
    </reaction>
</comment>
<comment type="cofactor">
    <cofactor evidence="2">
        <name>a divalent metal cation</name>
        <dbReference type="ChEBI" id="CHEBI:60240"/>
    </cofactor>
    <text evidence="2">Binds 1 divalent metal cation per subunit.</text>
</comment>
<comment type="subunit">
    <text evidence="1 2">Component of the EKC/KEOPS complex composed of at least GON7, TP53RK, TPRKB, OSGEP and LAGE3; the whole complex dimerizes.</text>
</comment>
<comment type="subcellular location">
    <subcellularLocation>
        <location evidence="2">Cytoplasm</location>
    </subcellularLocation>
    <subcellularLocation>
        <location evidence="2">Nucleus</location>
    </subcellularLocation>
</comment>
<comment type="similarity">
    <text evidence="2">Belongs to the KAE1 / TsaD family.</text>
</comment>
<keyword id="KW-0012">Acyltransferase</keyword>
<keyword id="KW-0963">Cytoplasm</keyword>
<keyword id="KW-0479">Metal-binding</keyword>
<keyword id="KW-0539">Nucleus</keyword>
<keyword id="KW-1185">Reference proteome</keyword>
<keyword id="KW-0808">Transferase</keyword>
<keyword id="KW-0819">tRNA processing</keyword>
<name>OSGEP_BOVIN</name>
<proteinExistence type="evidence at transcript level"/>
<evidence type="ECO:0000250" key="1">
    <source>
        <dbReference type="UniProtKB" id="Q9NPF4"/>
    </source>
</evidence>
<evidence type="ECO:0000255" key="2">
    <source>
        <dbReference type="HAMAP-Rule" id="MF_03180"/>
    </source>
</evidence>
<dbReference type="EC" id="2.3.1.234" evidence="2"/>
<dbReference type="EMBL" id="BC120156">
    <property type="protein sequence ID" value="AAI20157.1"/>
    <property type="molecule type" value="mRNA"/>
</dbReference>
<dbReference type="RefSeq" id="NP_001068787.1">
    <property type="nucleotide sequence ID" value="NM_001075319.2"/>
</dbReference>
<dbReference type="SMR" id="Q0VCI1"/>
<dbReference type="FunCoup" id="Q0VCI1">
    <property type="interactions" value="3136"/>
</dbReference>
<dbReference type="STRING" id="9913.ENSBTAP00000003557"/>
<dbReference type="PaxDb" id="9913-ENSBTAP00000003557"/>
<dbReference type="Ensembl" id="ENSBTAT00000003557.3">
    <property type="protein sequence ID" value="ENSBTAP00000003557.2"/>
    <property type="gene ID" value="ENSBTAG00000002743.4"/>
</dbReference>
<dbReference type="GeneID" id="507512"/>
<dbReference type="KEGG" id="bta:507512"/>
<dbReference type="CTD" id="55644"/>
<dbReference type="VEuPathDB" id="HostDB:ENSBTAG00000002743"/>
<dbReference type="VGNC" id="VGNC:32470">
    <property type="gene designation" value="OSGEP"/>
</dbReference>
<dbReference type="eggNOG" id="KOG2708">
    <property type="taxonomic scope" value="Eukaryota"/>
</dbReference>
<dbReference type="GeneTree" id="ENSGT00940000153744"/>
<dbReference type="HOGENOM" id="CLU_023208_2_2_1"/>
<dbReference type="InParanoid" id="Q0VCI1"/>
<dbReference type="OMA" id="HHRSWVV"/>
<dbReference type="OrthoDB" id="10254073at2759"/>
<dbReference type="TreeFam" id="TF313621"/>
<dbReference type="Proteomes" id="UP000009136">
    <property type="component" value="Chromosome 10"/>
</dbReference>
<dbReference type="Bgee" id="ENSBTAG00000002743">
    <property type="expression patterns" value="Expressed in caput epididymis and 104 other cell types or tissues"/>
</dbReference>
<dbReference type="GO" id="GO:0005737">
    <property type="term" value="C:cytoplasm"/>
    <property type="evidence" value="ECO:0000250"/>
    <property type="project" value="UniProtKB"/>
</dbReference>
<dbReference type="GO" id="GO:0005829">
    <property type="term" value="C:cytosol"/>
    <property type="evidence" value="ECO:0007669"/>
    <property type="project" value="Ensembl"/>
</dbReference>
<dbReference type="GO" id="GO:0000408">
    <property type="term" value="C:EKC/KEOPS complex"/>
    <property type="evidence" value="ECO:0000250"/>
    <property type="project" value="UniProtKB"/>
</dbReference>
<dbReference type="GO" id="GO:0005654">
    <property type="term" value="C:nucleoplasm"/>
    <property type="evidence" value="ECO:0007669"/>
    <property type="project" value="Ensembl"/>
</dbReference>
<dbReference type="GO" id="GO:0005634">
    <property type="term" value="C:nucleus"/>
    <property type="evidence" value="ECO:0000250"/>
    <property type="project" value="UniProtKB"/>
</dbReference>
<dbReference type="GO" id="GO:0046872">
    <property type="term" value="F:metal ion binding"/>
    <property type="evidence" value="ECO:0007669"/>
    <property type="project" value="UniProtKB-KW"/>
</dbReference>
<dbReference type="GO" id="GO:0061711">
    <property type="term" value="F:N(6)-L-threonylcarbamoyladenine synthase activity"/>
    <property type="evidence" value="ECO:0007669"/>
    <property type="project" value="UniProtKB-EC"/>
</dbReference>
<dbReference type="GO" id="GO:0002949">
    <property type="term" value="P:tRNA threonylcarbamoyladenosine modification"/>
    <property type="evidence" value="ECO:0000250"/>
    <property type="project" value="UniProtKB"/>
</dbReference>
<dbReference type="CDD" id="cd24132">
    <property type="entry name" value="ASKHA_NBD_OSGEP_like_euk"/>
    <property type="match status" value="1"/>
</dbReference>
<dbReference type="FunFam" id="3.30.420.40:FF:000038">
    <property type="entry name" value="Probable tRNA N6-adenosine threonylcarbamoyltransferase"/>
    <property type="match status" value="1"/>
</dbReference>
<dbReference type="FunFam" id="3.30.420.40:FF:000295">
    <property type="entry name" value="Probable tRNA N6-adenosine threonylcarbamoyltransferase"/>
    <property type="match status" value="1"/>
</dbReference>
<dbReference type="Gene3D" id="3.30.420.40">
    <property type="match status" value="2"/>
</dbReference>
<dbReference type="HAMAP" id="MF_01446">
    <property type="entry name" value="Kae1"/>
    <property type="match status" value="1"/>
</dbReference>
<dbReference type="InterPro" id="IPR043129">
    <property type="entry name" value="ATPase_NBD"/>
</dbReference>
<dbReference type="InterPro" id="IPR000905">
    <property type="entry name" value="Gcp-like_dom"/>
</dbReference>
<dbReference type="InterPro" id="IPR017861">
    <property type="entry name" value="KAE1/TsaD"/>
</dbReference>
<dbReference type="InterPro" id="IPR034680">
    <property type="entry name" value="Kae1_archaea_euk"/>
</dbReference>
<dbReference type="InterPro" id="IPR017860">
    <property type="entry name" value="Peptidase_M22_CS"/>
</dbReference>
<dbReference type="NCBIfam" id="TIGR03722">
    <property type="entry name" value="arch_KAE1"/>
    <property type="match status" value="1"/>
</dbReference>
<dbReference type="NCBIfam" id="TIGR00329">
    <property type="entry name" value="gcp_kae1"/>
    <property type="match status" value="1"/>
</dbReference>
<dbReference type="PANTHER" id="PTHR11735">
    <property type="entry name" value="TRNA N6-ADENOSINE THREONYLCARBAMOYLTRANSFERASE"/>
    <property type="match status" value="1"/>
</dbReference>
<dbReference type="PANTHER" id="PTHR11735:SF14">
    <property type="entry name" value="TRNA N6-ADENOSINE THREONYLCARBAMOYLTRANSFERASE"/>
    <property type="match status" value="1"/>
</dbReference>
<dbReference type="Pfam" id="PF00814">
    <property type="entry name" value="TsaD"/>
    <property type="match status" value="1"/>
</dbReference>
<dbReference type="PRINTS" id="PR00789">
    <property type="entry name" value="OSIALOPTASE"/>
</dbReference>
<dbReference type="SUPFAM" id="SSF53067">
    <property type="entry name" value="Actin-like ATPase domain"/>
    <property type="match status" value="1"/>
</dbReference>
<dbReference type="PROSITE" id="PS01016">
    <property type="entry name" value="GLYCOPROTEASE"/>
    <property type="match status" value="1"/>
</dbReference>
<feature type="chain" id="PRO_0000300637" description="tRNA N6-adenosine threonylcarbamoyltransferase">
    <location>
        <begin position="1"/>
        <end position="335"/>
    </location>
</feature>
<feature type="binding site" evidence="2">
    <location>
        <position position="109"/>
    </location>
    <ligand>
        <name>a divalent metal cation</name>
        <dbReference type="ChEBI" id="CHEBI:60240"/>
    </ligand>
</feature>
<feature type="binding site" evidence="2">
    <location>
        <position position="113"/>
    </location>
    <ligand>
        <name>a divalent metal cation</name>
        <dbReference type="ChEBI" id="CHEBI:60240"/>
    </ligand>
</feature>
<feature type="binding site" evidence="2">
    <location>
        <begin position="130"/>
        <end position="134"/>
    </location>
    <ligand>
        <name>substrate</name>
    </ligand>
</feature>
<feature type="binding site" evidence="2">
    <location>
        <position position="130"/>
    </location>
    <ligand>
        <name>a divalent metal cation</name>
        <dbReference type="ChEBI" id="CHEBI:60240"/>
    </ligand>
</feature>
<feature type="binding site" evidence="2">
    <location>
        <position position="162"/>
    </location>
    <ligand>
        <name>substrate</name>
    </ligand>
</feature>
<feature type="binding site" evidence="2">
    <location>
        <position position="177"/>
    </location>
    <ligand>
        <name>substrate</name>
    </ligand>
</feature>
<feature type="binding site" evidence="2">
    <location>
        <position position="181"/>
    </location>
    <ligand>
        <name>substrate</name>
    </ligand>
</feature>
<feature type="binding site" evidence="2">
    <location>
        <position position="266"/>
    </location>
    <ligand>
        <name>substrate</name>
    </ligand>
</feature>
<feature type="binding site" evidence="2">
    <location>
        <position position="294"/>
    </location>
    <ligand>
        <name>a divalent metal cation</name>
        <dbReference type="ChEBI" id="CHEBI:60240"/>
    </ligand>
</feature>
<reference key="1">
    <citation type="submission" date="2006-08" db="EMBL/GenBank/DDBJ databases">
        <authorList>
            <consortium name="NIH - Mammalian Gene Collection (MGC) project"/>
        </authorList>
    </citation>
    <scope>NUCLEOTIDE SEQUENCE [LARGE SCALE MRNA]</scope>
    <source>
        <strain>Hereford</strain>
        <tissue>Fetal brain</tissue>
    </source>
</reference>
<accession>Q0VCI1</accession>
<sequence>MPAVLGFEGSANKIGVGVVRDGKVLANPRRTYVTPPGTGFLPGDTARHHRAVILDLLQEALTEAGLTSEDIDCIAYTKGPGMGAPLVSVAVVARTVAQLWNKPLLGVNHCIGHIEMGRLITGATNPTVLYVSGGNTQVIAYSEHRYRIFGETIDIAVGNCLDRFARVLKISNDPSPGYNIEQMAKRGKKLVELPYTVKGMDVSFSGILSFIEDVAQRMLATGECTPEDLCFSLQETVFAMLVEITERAMAHCGSQEALIVGGVGCNVRLQEMMETMCQERGARLFATDERFCIDNGAMIAQAGWEMFQAGHRTPLSESGITQRYRTDEVEVTWRD</sequence>
<organism>
    <name type="scientific">Bos taurus</name>
    <name type="common">Bovine</name>
    <dbReference type="NCBI Taxonomy" id="9913"/>
    <lineage>
        <taxon>Eukaryota</taxon>
        <taxon>Metazoa</taxon>
        <taxon>Chordata</taxon>
        <taxon>Craniata</taxon>
        <taxon>Vertebrata</taxon>
        <taxon>Euteleostomi</taxon>
        <taxon>Mammalia</taxon>
        <taxon>Eutheria</taxon>
        <taxon>Laurasiatheria</taxon>
        <taxon>Artiodactyla</taxon>
        <taxon>Ruminantia</taxon>
        <taxon>Pecora</taxon>
        <taxon>Bovidae</taxon>
        <taxon>Bovinae</taxon>
        <taxon>Bos</taxon>
    </lineage>
</organism>